<feature type="chain" id="PRO_1000003800" description="Nucleoid-associated protein PA14_44620">
    <location>
        <begin position="1"/>
        <end position="108"/>
    </location>
</feature>
<feature type="region of interest" description="Disordered" evidence="2">
    <location>
        <begin position="1"/>
        <end position="25"/>
    </location>
</feature>
<feature type="region of interest" description="Disordered" evidence="2">
    <location>
        <begin position="87"/>
        <end position="108"/>
    </location>
</feature>
<feature type="compositionally biased region" description="Polar residues" evidence="2">
    <location>
        <begin position="87"/>
        <end position="98"/>
    </location>
</feature>
<evidence type="ECO:0000255" key="1">
    <source>
        <dbReference type="HAMAP-Rule" id="MF_00274"/>
    </source>
</evidence>
<evidence type="ECO:0000256" key="2">
    <source>
        <dbReference type="SAM" id="MobiDB-lite"/>
    </source>
</evidence>
<proteinExistence type="inferred from homology"/>
<protein>
    <recommendedName>
        <fullName evidence="1">Nucleoid-associated protein PA14_44620</fullName>
    </recommendedName>
</protein>
<dbReference type="EMBL" id="CP000438">
    <property type="protein sequence ID" value="ABJ10713.1"/>
    <property type="molecule type" value="Genomic_DNA"/>
</dbReference>
<dbReference type="RefSeq" id="WP_003087236.1">
    <property type="nucleotide sequence ID" value="NZ_CP034244.1"/>
</dbReference>
<dbReference type="SMR" id="Q02K16"/>
<dbReference type="KEGG" id="pau:PA14_44620"/>
<dbReference type="PseudoCAP" id="PA14_44620"/>
<dbReference type="HOGENOM" id="CLU_140930_0_0_6"/>
<dbReference type="BioCyc" id="PAER208963:G1G74-3746-MONOMER"/>
<dbReference type="Proteomes" id="UP000000653">
    <property type="component" value="Chromosome"/>
</dbReference>
<dbReference type="GO" id="GO:0043590">
    <property type="term" value="C:bacterial nucleoid"/>
    <property type="evidence" value="ECO:0007669"/>
    <property type="project" value="UniProtKB-UniRule"/>
</dbReference>
<dbReference type="GO" id="GO:0005829">
    <property type="term" value="C:cytosol"/>
    <property type="evidence" value="ECO:0007669"/>
    <property type="project" value="TreeGrafter"/>
</dbReference>
<dbReference type="GO" id="GO:0003677">
    <property type="term" value="F:DNA binding"/>
    <property type="evidence" value="ECO:0007669"/>
    <property type="project" value="UniProtKB-UniRule"/>
</dbReference>
<dbReference type="FunFam" id="3.30.1310.10:FF:000001">
    <property type="entry name" value="Nucleoid-associated protein YbaB"/>
    <property type="match status" value="1"/>
</dbReference>
<dbReference type="Gene3D" id="3.30.1310.10">
    <property type="entry name" value="Nucleoid-associated protein YbaB-like domain"/>
    <property type="match status" value="1"/>
</dbReference>
<dbReference type="HAMAP" id="MF_00274">
    <property type="entry name" value="DNA_YbaB_EbfC"/>
    <property type="match status" value="1"/>
</dbReference>
<dbReference type="InterPro" id="IPR036894">
    <property type="entry name" value="YbaB-like_sf"/>
</dbReference>
<dbReference type="InterPro" id="IPR004401">
    <property type="entry name" value="YbaB/EbfC"/>
</dbReference>
<dbReference type="NCBIfam" id="TIGR00103">
    <property type="entry name" value="DNA_YbaB_EbfC"/>
    <property type="match status" value="1"/>
</dbReference>
<dbReference type="PANTHER" id="PTHR33449">
    <property type="entry name" value="NUCLEOID-ASSOCIATED PROTEIN YBAB"/>
    <property type="match status" value="1"/>
</dbReference>
<dbReference type="PANTHER" id="PTHR33449:SF1">
    <property type="entry name" value="NUCLEOID-ASSOCIATED PROTEIN YBAB"/>
    <property type="match status" value="1"/>
</dbReference>
<dbReference type="Pfam" id="PF02575">
    <property type="entry name" value="YbaB_DNA_bd"/>
    <property type="match status" value="1"/>
</dbReference>
<dbReference type="PIRSF" id="PIRSF004555">
    <property type="entry name" value="UCP004555"/>
    <property type="match status" value="1"/>
</dbReference>
<dbReference type="SUPFAM" id="SSF82607">
    <property type="entry name" value="YbaB-like"/>
    <property type="match status" value="1"/>
</dbReference>
<name>Y4462_PSEAB</name>
<reference key="1">
    <citation type="journal article" date="2006" name="Genome Biol.">
        <title>Genomic analysis reveals that Pseudomonas aeruginosa virulence is combinatorial.</title>
        <authorList>
            <person name="Lee D.G."/>
            <person name="Urbach J.M."/>
            <person name="Wu G."/>
            <person name="Liberati N.T."/>
            <person name="Feinbaum R.L."/>
            <person name="Miyata S."/>
            <person name="Diggins L.T."/>
            <person name="He J."/>
            <person name="Saucier M."/>
            <person name="Deziel E."/>
            <person name="Friedman L."/>
            <person name="Li L."/>
            <person name="Grills G."/>
            <person name="Montgomery K."/>
            <person name="Kucherlapati R."/>
            <person name="Rahme L.G."/>
            <person name="Ausubel F.M."/>
        </authorList>
    </citation>
    <scope>NUCLEOTIDE SEQUENCE [LARGE SCALE GENOMIC DNA]</scope>
    <source>
        <strain>UCBPP-PA14</strain>
    </source>
</reference>
<keyword id="KW-0963">Cytoplasm</keyword>
<keyword id="KW-0238">DNA-binding</keyword>
<accession>Q02K16</accession>
<gene>
    <name type="ordered locus">PA14_44620</name>
</gene>
<organism>
    <name type="scientific">Pseudomonas aeruginosa (strain UCBPP-PA14)</name>
    <dbReference type="NCBI Taxonomy" id="208963"/>
    <lineage>
        <taxon>Bacteria</taxon>
        <taxon>Pseudomonadati</taxon>
        <taxon>Pseudomonadota</taxon>
        <taxon>Gammaproteobacteria</taxon>
        <taxon>Pseudomonadales</taxon>
        <taxon>Pseudomonadaceae</taxon>
        <taxon>Pseudomonas</taxon>
    </lineage>
</organism>
<sequence length="108" mass="11877">MMKGGMAGLMKQAQQMQEKMQKMQEELANAEVTGQSGAGLVSVVMTGRHDVKRVSLDDSLMQEDKEILEDLIAAAVNDAVRKIEQNNQEKMSGFTSGMQLPPGFKMPF</sequence>
<comment type="function">
    <text evidence="1">Binds to DNA and alters its conformation. May be involved in regulation of gene expression, nucleoid organization and DNA protection.</text>
</comment>
<comment type="subunit">
    <text evidence="1">Homodimer.</text>
</comment>
<comment type="subcellular location">
    <subcellularLocation>
        <location evidence="1">Cytoplasm</location>
        <location evidence="1">Nucleoid</location>
    </subcellularLocation>
</comment>
<comment type="similarity">
    <text evidence="1">Belongs to the YbaB/EbfC family.</text>
</comment>